<feature type="chain" id="PRO_0000291030" description="NAD(P)H dehydrogenase (quinone)">
    <location>
        <begin position="1"/>
        <end position="198"/>
    </location>
</feature>
<feature type="domain" description="Flavodoxin-like" evidence="1">
    <location>
        <begin position="4"/>
        <end position="189"/>
    </location>
</feature>
<feature type="binding site" evidence="1">
    <location>
        <begin position="10"/>
        <end position="15"/>
    </location>
    <ligand>
        <name>FMN</name>
        <dbReference type="ChEBI" id="CHEBI:58210"/>
    </ligand>
</feature>
<feature type="binding site" evidence="1">
    <location>
        <position position="12"/>
    </location>
    <ligand>
        <name>NAD(+)</name>
        <dbReference type="ChEBI" id="CHEBI:57540"/>
    </ligand>
</feature>
<feature type="binding site" evidence="1">
    <location>
        <begin position="78"/>
        <end position="80"/>
    </location>
    <ligand>
        <name>FMN</name>
        <dbReference type="ChEBI" id="CHEBI:58210"/>
    </ligand>
</feature>
<feature type="binding site" evidence="1">
    <location>
        <position position="98"/>
    </location>
    <ligand>
        <name>substrate</name>
    </ligand>
</feature>
<feature type="binding site" evidence="1">
    <location>
        <begin position="113"/>
        <end position="118"/>
    </location>
    <ligand>
        <name>FMN</name>
        <dbReference type="ChEBI" id="CHEBI:58210"/>
    </ligand>
</feature>
<feature type="binding site" evidence="1">
    <location>
        <position position="133"/>
    </location>
    <ligand>
        <name>FMN</name>
        <dbReference type="ChEBI" id="CHEBI:58210"/>
    </ligand>
</feature>
<sequence>MTKVLVLYYSMYGHIETMARAVAEGASKVDGAEVVVKRVPETMPPQLFEKAGGKTQTAPVATPQELADYDAIIFGTPTRFGNMSGQMRTFLDQTGGLWASGALYGKLASVFSSTGTGGGQEQTITSTWTTLAHHGMVIVPIGYAAQELFDVSQVRGGTPYGATTIAGGDGSRQPSQEELSIARYQGEYVAGLAVKLNG</sequence>
<keyword id="KW-0285">Flavoprotein</keyword>
<keyword id="KW-0288">FMN</keyword>
<keyword id="KW-0520">NAD</keyword>
<keyword id="KW-0521">NADP</keyword>
<keyword id="KW-0547">Nucleotide-binding</keyword>
<keyword id="KW-0560">Oxidoreductase</keyword>
<keyword id="KW-1185">Reference proteome</keyword>
<reference key="1">
    <citation type="journal article" date="2005" name="Nucleic Acids Res.">
        <title>Genome dynamics and diversity of Shigella species, the etiologic agents of bacillary dysentery.</title>
        <authorList>
            <person name="Yang F."/>
            <person name="Yang J."/>
            <person name="Zhang X."/>
            <person name="Chen L."/>
            <person name="Jiang Y."/>
            <person name="Yan Y."/>
            <person name="Tang X."/>
            <person name="Wang J."/>
            <person name="Xiong Z."/>
            <person name="Dong J."/>
            <person name="Xue Y."/>
            <person name="Zhu Y."/>
            <person name="Xu X."/>
            <person name="Sun L."/>
            <person name="Chen S."/>
            <person name="Nie H."/>
            <person name="Peng J."/>
            <person name="Xu J."/>
            <person name="Wang Y."/>
            <person name="Yuan Z."/>
            <person name="Wen Y."/>
            <person name="Yao Z."/>
            <person name="Shen Y."/>
            <person name="Qiang B."/>
            <person name="Hou Y."/>
            <person name="Yu J."/>
            <person name="Jin Q."/>
        </authorList>
    </citation>
    <scope>NUCLEOTIDE SEQUENCE [LARGE SCALE GENOMIC DNA]</scope>
    <source>
        <strain>Sd197</strain>
    </source>
</reference>
<proteinExistence type="inferred from homology"/>
<evidence type="ECO:0000255" key="1">
    <source>
        <dbReference type="HAMAP-Rule" id="MF_01017"/>
    </source>
</evidence>
<accession>Q32HQ6</accession>
<gene>
    <name type="ordered locus">SDY_0980</name>
</gene>
<comment type="catalytic activity">
    <reaction evidence="1">
        <text>a quinone + NADH + H(+) = a quinol + NAD(+)</text>
        <dbReference type="Rhea" id="RHEA:46160"/>
        <dbReference type="ChEBI" id="CHEBI:15378"/>
        <dbReference type="ChEBI" id="CHEBI:24646"/>
        <dbReference type="ChEBI" id="CHEBI:57540"/>
        <dbReference type="ChEBI" id="CHEBI:57945"/>
        <dbReference type="ChEBI" id="CHEBI:132124"/>
        <dbReference type="EC" id="1.6.5.2"/>
    </reaction>
</comment>
<comment type="catalytic activity">
    <reaction evidence="1">
        <text>a quinone + NADPH + H(+) = a quinol + NADP(+)</text>
        <dbReference type="Rhea" id="RHEA:46164"/>
        <dbReference type="ChEBI" id="CHEBI:15378"/>
        <dbReference type="ChEBI" id="CHEBI:24646"/>
        <dbReference type="ChEBI" id="CHEBI:57783"/>
        <dbReference type="ChEBI" id="CHEBI:58349"/>
        <dbReference type="ChEBI" id="CHEBI:132124"/>
        <dbReference type="EC" id="1.6.5.2"/>
    </reaction>
</comment>
<comment type="cofactor">
    <cofactor evidence="1">
        <name>FMN</name>
        <dbReference type="ChEBI" id="CHEBI:58210"/>
    </cofactor>
    <text evidence="1">Binds 1 FMN per monomer.</text>
</comment>
<comment type="similarity">
    <text evidence="1">Belongs to the WrbA family.</text>
</comment>
<protein>
    <recommendedName>
        <fullName evidence="1">NAD(P)H dehydrogenase (quinone)</fullName>
        <ecNumber evidence="1">1.6.5.2</ecNumber>
    </recommendedName>
    <alternativeName>
        <fullName>Flavoprotein WrbA</fullName>
    </alternativeName>
    <alternativeName>
        <fullName evidence="1">NAD(P)H:quinone oxidoreductase</fullName>
        <shortName evidence="1">NQO</shortName>
    </alternativeName>
</protein>
<name>NQOR_SHIDS</name>
<organism>
    <name type="scientific">Shigella dysenteriae serotype 1 (strain Sd197)</name>
    <dbReference type="NCBI Taxonomy" id="300267"/>
    <lineage>
        <taxon>Bacteria</taxon>
        <taxon>Pseudomonadati</taxon>
        <taxon>Pseudomonadota</taxon>
        <taxon>Gammaproteobacteria</taxon>
        <taxon>Enterobacterales</taxon>
        <taxon>Enterobacteriaceae</taxon>
        <taxon>Shigella</taxon>
    </lineage>
</organism>
<dbReference type="EC" id="1.6.5.2" evidence="1"/>
<dbReference type="EMBL" id="CP000034">
    <property type="protein sequence ID" value="ABB61149.1"/>
    <property type="molecule type" value="Genomic_DNA"/>
</dbReference>
<dbReference type="RefSeq" id="WP_000170081.1">
    <property type="nucleotide sequence ID" value="NC_007606.1"/>
</dbReference>
<dbReference type="RefSeq" id="YP_402640.1">
    <property type="nucleotide sequence ID" value="NC_007606.1"/>
</dbReference>
<dbReference type="SMR" id="Q32HQ6"/>
<dbReference type="STRING" id="300267.SDY_0980"/>
<dbReference type="EnsemblBacteria" id="ABB61149">
    <property type="protein sequence ID" value="ABB61149"/>
    <property type="gene ID" value="SDY_0980"/>
</dbReference>
<dbReference type="KEGG" id="sdy:SDY_0980"/>
<dbReference type="PATRIC" id="fig|300267.13.peg.1139"/>
<dbReference type="HOGENOM" id="CLU_051402_0_2_6"/>
<dbReference type="Proteomes" id="UP000002716">
    <property type="component" value="Chromosome"/>
</dbReference>
<dbReference type="GO" id="GO:0016020">
    <property type="term" value="C:membrane"/>
    <property type="evidence" value="ECO:0007669"/>
    <property type="project" value="TreeGrafter"/>
</dbReference>
<dbReference type="GO" id="GO:0050660">
    <property type="term" value="F:flavin adenine dinucleotide binding"/>
    <property type="evidence" value="ECO:0007669"/>
    <property type="project" value="UniProtKB-UniRule"/>
</dbReference>
<dbReference type="GO" id="GO:0010181">
    <property type="term" value="F:FMN binding"/>
    <property type="evidence" value="ECO:0007669"/>
    <property type="project" value="InterPro"/>
</dbReference>
<dbReference type="GO" id="GO:0051287">
    <property type="term" value="F:NAD binding"/>
    <property type="evidence" value="ECO:0007669"/>
    <property type="project" value="UniProtKB-UniRule"/>
</dbReference>
<dbReference type="GO" id="GO:0050136">
    <property type="term" value="F:NADH:ubiquinone reductase (non-electrogenic) activity"/>
    <property type="evidence" value="ECO:0007669"/>
    <property type="project" value="RHEA"/>
</dbReference>
<dbReference type="GO" id="GO:0050661">
    <property type="term" value="F:NADP binding"/>
    <property type="evidence" value="ECO:0007669"/>
    <property type="project" value="UniProtKB-UniRule"/>
</dbReference>
<dbReference type="GO" id="GO:0008753">
    <property type="term" value="F:NADPH dehydrogenase (quinone) activity"/>
    <property type="evidence" value="ECO:0007669"/>
    <property type="project" value="RHEA"/>
</dbReference>
<dbReference type="FunFam" id="3.40.50.360:FF:000004">
    <property type="entry name" value="NAD(P)H dehydrogenase (quinone)"/>
    <property type="match status" value="1"/>
</dbReference>
<dbReference type="Gene3D" id="3.40.50.360">
    <property type="match status" value="1"/>
</dbReference>
<dbReference type="HAMAP" id="MF_01017">
    <property type="entry name" value="NQOR"/>
    <property type="match status" value="1"/>
</dbReference>
<dbReference type="InterPro" id="IPR008254">
    <property type="entry name" value="Flavodoxin/NO_synth"/>
</dbReference>
<dbReference type="InterPro" id="IPR029039">
    <property type="entry name" value="Flavoprotein-like_sf"/>
</dbReference>
<dbReference type="InterPro" id="IPR010089">
    <property type="entry name" value="Flavoprotein_WrbA-like"/>
</dbReference>
<dbReference type="InterPro" id="IPR005025">
    <property type="entry name" value="FMN_Rdtase-like_dom"/>
</dbReference>
<dbReference type="InterPro" id="IPR037513">
    <property type="entry name" value="NQO"/>
</dbReference>
<dbReference type="NCBIfam" id="TIGR01755">
    <property type="entry name" value="flav_wrbA"/>
    <property type="match status" value="1"/>
</dbReference>
<dbReference type="NCBIfam" id="NF002999">
    <property type="entry name" value="PRK03767.1"/>
    <property type="match status" value="1"/>
</dbReference>
<dbReference type="PANTHER" id="PTHR30546">
    <property type="entry name" value="FLAVODOXIN-RELATED PROTEIN WRBA-RELATED"/>
    <property type="match status" value="1"/>
</dbReference>
<dbReference type="PANTHER" id="PTHR30546:SF23">
    <property type="entry name" value="FLAVOPROTEIN-LIKE PROTEIN YCP4-RELATED"/>
    <property type="match status" value="1"/>
</dbReference>
<dbReference type="Pfam" id="PF03358">
    <property type="entry name" value="FMN_red"/>
    <property type="match status" value="1"/>
</dbReference>
<dbReference type="SUPFAM" id="SSF52218">
    <property type="entry name" value="Flavoproteins"/>
    <property type="match status" value="1"/>
</dbReference>
<dbReference type="PROSITE" id="PS50902">
    <property type="entry name" value="FLAVODOXIN_LIKE"/>
    <property type="match status" value="1"/>
</dbReference>